<evidence type="ECO:0000255" key="1">
    <source>
        <dbReference type="HAMAP-Rule" id="MF_00651"/>
    </source>
</evidence>
<keyword id="KW-0963">Cytoplasm</keyword>
<keyword id="KW-0378">Hydrolase</keyword>
<keyword id="KW-0540">Nuclease</keyword>
<keyword id="KW-0690">Ribosome biogenesis</keyword>
<gene>
    <name evidence="1" type="primary">yqgF</name>
    <name type="ordered locus">PC1_3713</name>
</gene>
<proteinExistence type="inferred from homology"/>
<name>YQGF_PECCP</name>
<accession>C6DFI9</accession>
<feature type="chain" id="PRO_1000212416" description="Putative pre-16S rRNA nuclease">
    <location>
        <begin position="1"/>
        <end position="139"/>
    </location>
</feature>
<dbReference type="EC" id="3.1.-.-" evidence="1"/>
<dbReference type="EMBL" id="CP001657">
    <property type="protein sequence ID" value="ACT14728.1"/>
    <property type="molecule type" value="Genomic_DNA"/>
</dbReference>
<dbReference type="SMR" id="C6DFI9"/>
<dbReference type="STRING" id="561230.PC1_3713"/>
<dbReference type="KEGG" id="pct:PC1_3713"/>
<dbReference type="eggNOG" id="COG0816">
    <property type="taxonomic scope" value="Bacteria"/>
</dbReference>
<dbReference type="HOGENOM" id="CLU_098240_3_0_6"/>
<dbReference type="OrthoDB" id="9796140at2"/>
<dbReference type="Proteomes" id="UP000002736">
    <property type="component" value="Chromosome"/>
</dbReference>
<dbReference type="GO" id="GO:0005829">
    <property type="term" value="C:cytosol"/>
    <property type="evidence" value="ECO:0007669"/>
    <property type="project" value="TreeGrafter"/>
</dbReference>
<dbReference type="GO" id="GO:0004518">
    <property type="term" value="F:nuclease activity"/>
    <property type="evidence" value="ECO:0007669"/>
    <property type="project" value="UniProtKB-KW"/>
</dbReference>
<dbReference type="GO" id="GO:0000967">
    <property type="term" value="P:rRNA 5'-end processing"/>
    <property type="evidence" value="ECO:0007669"/>
    <property type="project" value="UniProtKB-UniRule"/>
</dbReference>
<dbReference type="CDD" id="cd16964">
    <property type="entry name" value="YqgF"/>
    <property type="match status" value="1"/>
</dbReference>
<dbReference type="FunFam" id="3.30.420.140:FF:000002">
    <property type="entry name" value="Putative pre-16S rRNA nuclease"/>
    <property type="match status" value="1"/>
</dbReference>
<dbReference type="Gene3D" id="3.30.420.140">
    <property type="entry name" value="YqgF/RNase H-like domain"/>
    <property type="match status" value="1"/>
</dbReference>
<dbReference type="HAMAP" id="MF_00651">
    <property type="entry name" value="Nuclease_YqgF"/>
    <property type="match status" value="1"/>
</dbReference>
<dbReference type="InterPro" id="IPR012337">
    <property type="entry name" value="RNaseH-like_sf"/>
</dbReference>
<dbReference type="InterPro" id="IPR005227">
    <property type="entry name" value="YqgF"/>
</dbReference>
<dbReference type="InterPro" id="IPR006641">
    <property type="entry name" value="YqgF/RNaseH-like_dom"/>
</dbReference>
<dbReference type="InterPro" id="IPR037027">
    <property type="entry name" value="YqgF/RNaseH-like_dom_sf"/>
</dbReference>
<dbReference type="NCBIfam" id="TIGR00250">
    <property type="entry name" value="RNAse_H_YqgF"/>
    <property type="match status" value="1"/>
</dbReference>
<dbReference type="PANTHER" id="PTHR33317">
    <property type="entry name" value="POLYNUCLEOTIDYL TRANSFERASE, RIBONUCLEASE H-LIKE SUPERFAMILY PROTEIN"/>
    <property type="match status" value="1"/>
</dbReference>
<dbReference type="PANTHER" id="PTHR33317:SF4">
    <property type="entry name" value="POLYNUCLEOTIDYL TRANSFERASE, RIBONUCLEASE H-LIKE SUPERFAMILY PROTEIN"/>
    <property type="match status" value="1"/>
</dbReference>
<dbReference type="Pfam" id="PF03652">
    <property type="entry name" value="RuvX"/>
    <property type="match status" value="1"/>
</dbReference>
<dbReference type="SMART" id="SM00732">
    <property type="entry name" value="YqgFc"/>
    <property type="match status" value="1"/>
</dbReference>
<dbReference type="SUPFAM" id="SSF53098">
    <property type="entry name" value="Ribonuclease H-like"/>
    <property type="match status" value="1"/>
</dbReference>
<organism>
    <name type="scientific">Pectobacterium carotovorum subsp. carotovorum (strain PC1)</name>
    <dbReference type="NCBI Taxonomy" id="561230"/>
    <lineage>
        <taxon>Bacteria</taxon>
        <taxon>Pseudomonadati</taxon>
        <taxon>Pseudomonadota</taxon>
        <taxon>Gammaproteobacteria</taxon>
        <taxon>Enterobacterales</taxon>
        <taxon>Pectobacteriaceae</taxon>
        <taxon>Pectobacterium</taxon>
    </lineage>
</organism>
<comment type="function">
    <text evidence="1">Could be a nuclease involved in processing of the 5'-end of pre-16S rRNA.</text>
</comment>
<comment type="subcellular location">
    <subcellularLocation>
        <location evidence="1">Cytoplasm</location>
    </subcellularLocation>
</comment>
<comment type="similarity">
    <text evidence="1">Belongs to the YqgF nuclease family.</text>
</comment>
<reference key="1">
    <citation type="submission" date="2009-07" db="EMBL/GenBank/DDBJ databases">
        <title>Complete sequence of Pectobacterium carotovorum subsp. carotovorum PC1.</title>
        <authorList>
            <consortium name="US DOE Joint Genome Institute"/>
            <person name="Lucas S."/>
            <person name="Copeland A."/>
            <person name="Lapidus A."/>
            <person name="Glavina del Rio T."/>
            <person name="Tice H."/>
            <person name="Bruce D."/>
            <person name="Goodwin L."/>
            <person name="Pitluck S."/>
            <person name="Munk A.C."/>
            <person name="Brettin T."/>
            <person name="Detter J.C."/>
            <person name="Han C."/>
            <person name="Tapia R."/>
            <person name="Larimer F."/>
            <person name="Land M."/>
            <person name="Hauser L."/>
            <person name="Kyrpides N."/>
            <person name="Mikhailova N."/>
            <person name="Balakrishnan V."/>
            <person name="Glasner J."/>
            <person name="Perna N.T."/>
        </authorList>
    </citation>
    <scope>NUCLEOTIDE SEQUENCE [LARGE SCALE GENOMIC DNA]</scope>
    <source>
        <strain>PC1</strain>
    </source>
</reference>
<sequence>MKSRTILAFDFGTKSIGVAIGQEITGTARPLTSFKAQEGIPDWQKVEKLLSEWQPDLVVVGLPLNMDGTEQPLTARARKFANRLHGRFGVAIALHDERLSTVEARADLFERGGFKALDKGSVDAASAVIILESWFEAQH</sequence>
<protein>
    <recommendedName>
        <fullName evidence="1">Putative pre-16S rRNA nuclease</fullName>
        <ecNumber evidence="1">3.1.-.-</ecNumber>
    </recommendedName>
</protein>